<evidence type="ECO:0000255" key="1">
    <source>
        <dbReference type="HAMAP-Rule" id="MF_00215"/>
    </source>
</evidence>
<evidence type="ECO:0000256" key="2">
    <source>
        <dbReference type="SAM" id="MobiDB-lite"/>
    </source>
</evidence>
<gene>
    <name evidence="1" type="primary">coaA</name>
    <name type="ordered locus">Noca_0895</name>
</gene>
<proteinExistence type="inferred from homology"/>
<organism>
    <name type="scientific">Nocardioides sp. (strain ATCC BAA-499 / JS614)</name>
    <dbReference type="NCBI Taxonomy" id="196162"/>
    <lineage>
        <taxon>Bacteria</taxon>
        <taxon>Bacillati</taxon>
        <taxon>Actinomycetota</taxon>
        <taxon>Actinomycetes</taxon>
        <taxon>Propionibacteriales</taxon>
        <taxon>Nocardioidaceae</taxon>
        <taxon>Nocardioides</taxon>
    </lineage>
</organism>
<protein>
    <recommendedName>
        <fullName evidence="1">Pantothenate kinase</fullName>
        <ecNumber evidence="1">2.7.1.33</ecNumber>
    </recommendedName>
    <alternativeName>
        <fullName evidence="1">Pantothenic acid kinase</fullName>
    </alternativeName>
</protein>
<dbReference type="EC" id="2.7.1.33" evidence="1"/>
<dbReference type="EMBL" id="CP000509">
    <property type="protein sequence ID" value="ABL80418.1"/>
    <property type="molecule type" value="Genomic_DNA"/>
</dbReference>
<dbReference type="RefSeq" id="WP_011754367.1">
    <property type="nucleotide sequence ID" value="NC_008699.1"/>
</dbReference>
<dbReference type="SMR" id="A1SF33"/>
<dbReference type="STRING" id="196162.Noca_0895"/>
<dbReference type="KEGG" id="nca:Noca_0895"/>
<dbReference type="eggNOG" id="COG1072">
    <property type="taxonomic scope" value="Bacteria"/>
</dbReference>
<dbReference type="HOGENOM" id="CLU_053818_1_1_11"/>
<dbReference type="OrthoDB" id="1550976at2"/>
<dbReference type="UniPathway" id="UPA00241">
    <property type="reaction ID" value="UER00352"/>
</dbReference>
<dbReference type="Proteomes" id="UP000000640">
    <property type="component" value="Chromosome"/>
</dbReference>
<dbReference type="GO" id="GO:0005737">
    <property type="term" value="C:cytoplasm"/>
    <property type="evidence" value="ECO:0007669"/>
    <property type="project" value="UniProtKB-SubCell"/>
</dbReference>
<dbReference type="GO" id="GO:0005524">
    <property type="term" value="F:ATP binding"/>
    <property type="evidence" value="ECO:0007669"/>
    <property type="project" value="UniProtKB-UniRule"/>
</dbReference>
<dbReference type="GO" id="GO:0004594">
    <property type="term" value="F:pantothenate kinase activity"/>
    <property type="evidence" value="ECO:0007669"/>
    <property type="project" value="UniProtKB-UniRule"/>
</dbReference>
<dbReference type="GO" id="GO:0015937">
    <property type="term" value="P:coenzyme A biosynthetic process"/>
    <property type="evidence" value="ECO:0007669"/>
    <property type="project" value="UniProtKB-UniRule"/>
</dbReference>
<dbReference type="CDD" id="cd02025">
    <property type="entry name" value="PanK"/>
    <property type="match status" value="1"/>
</dbReference>
<dbReference type="Gene3D" id="3.40.50.300">
    <property type="entry name" value="P-loop containing nucleotide triphosphate hydrolases"/>
    <property type="match status" value="1"/>
</dbReference>
<dbReference type="HAMAP" id="MF_00215">
    <property type="entry name" value="Pantothen_kinase_1"/>
    <property type="match status" value="1"/>
</dbReference>
<dbReference type="InterPro" id="IPR027417">
    <property type="entry name" value="P-loop_NTPase"/>
</dbReference>
<dbReference type="InterPro" id="IPR004566">
    <property type="entry name" value="PanK"/>
</dbReference>
<dbReference type="InterPro" id="IPR006083">
    <property type="entry name" value="PRK/URK"/>
</dbReference>
<dbReference type="NCBIfam" id="TIGR00554">
    <property type="entry name" value="panK_bact"/>
    <property type="match status" value="1"/>
</dbReference>
<dbReference type="PANTHER" id="PTHR10285">
    <property type="entry name" value="URIDINE KINASE"/>
    <property type="match status" value="1"/>
</dbReference>
<dbReference type="Pfam" id="PF00485">
    <property type="entry name" value="PRK"/>
    <property type="match status" value="1"/>
</dbReference>
<dbReference type="PIRSF" id="PIRSF000545">
    <property type="entry name" value="Pantothenate_kin"/>
    <property type="match status" value="1"/>
</dbReference>
<dbReference type="SUPFAM" id="SSF52540">
    <property type="entry name" value="P-loop containing nucleoside triphosphate hydrolases"/>
    <property type="match status" value="1"/>
</dbReference>
<sequence>MPAQGPSHGELPPADAGRESSPYLELDRSAWAALASEVENPLSAEEIRRLRGLGDQLDLDEVQQIYLPVSRLLSLYVESAGRLYRAQEEFLHQDQPPRTPFVIGLAGSVAVGKSTTARVLQEMLAHWPQHPNVALVTTDGFLYPNAELERRGLLERKGFPESYDRRALLKFVVDIKSGKDEVLAPTYSHLVYDVVPDEKVVIRRPDIVIVEGLNVLQPARVRDDGRTGLTLSDFFDFSVYVDAKTSTIRDWYVSRFLRLRETAFQDTGSYFAKYATLSIEEAMAEAERIWDTINGPNLAQNVLPTRSRATLVLRKDRDHSVRYVRLRKL</sequence>
<reference key="1">
    <citation type="submission" date="2006-12" db="EMBL/GenBank/DDBJ databases">
        <title>Complete sequence of chromosome 1 of Nocardioides sp. JS614.</title>
        <authorList>
            <person name="Copeland A."/>
            <person name="Lucas S."/>
            <person name="Lapidus A."/>
            <person name="Barry K."/>
            <person name="Detter J.C."/>
            <person name="Glavina del Rio T."/>
            <person name="Hammon N."/>
            <person name="Israni S."/>
            <person name="Dalin E."/>
            <person name="Tice H."/>
            <person name="Pitluck S."/>
            <person name="Thompson L.S."/>
            <person name="Brettin T."/>
            <person name="Bruce D."/>
            <person name="Han C."/>
            <person name="Tapia R."/>
            <person name="Schmutz J."/>
            <person name="Larimer F."/>
            <person name="Land M."/>
            <person name="Hauser L."/>
            <person name="Kyrpides N."/>
            <person name="Kim E."/>
            <person name="Mattes T."/>
            <person name="Gossett J."/>
            <person name="Richardson P."/>
        </authorList>
    </citation>
    <scope>NUCLEOTIDE SEQUENCE [LARGE SCALE GENOMIC DNA]</scope>
    <source>
        <strain>ATCC BAA-499 / JS614</strain>
    </source>
</reference>
<accession>A1SF33</accession>
<comment type="catalytic activity">
    <reaction evidence="1">
        <text>(R)-pantothenate + ATP = (R)-4'-phosphopantothenate + ADP + H(+)</text>
        <dbReference type="Rhea" id="RHEA:16373"/>
        <dbReference type="ChEBI" id="CHEBI:10986"/>
        <dbReference type="ChEBI" id="CHEBI:15378"/>
        <dbReference type="ChEBI" id="CHEBI:29032"/>
        <dbReference type="ChEBI" id="CHEBI:30616"/>
        <dbReference type="ChEBI" id="CHEBI:456216"/>
        <dbReference type="EC" id="2.7.1.33"/>
    </reaction>
</comment>
<comment type="pathway">
    <text evidence="1">Cofactor biosynthesis; coenzyme A biosynthesis; CoA from (R)-pantothenate: step 1/5.</text>
</comment>
<comment type="subcellular location">
    <subcellularLocation>
        <location evidence="1">Cytoplasm</location>
    </subcellularLocation>
</comment>
<comment type="similarity">
    <text evidence="1">Belongs to the prokaryotic pantothenate kinase family.</text>
</comment>
<feature type="chain" id="PRO_0000325558" description="Pantothenate kinase">
    <location>
        <begin position="1"/>
        <end position="329"/>
    </location>
</feature>
<feature type="region of interest" description="Disordered" evidence="2">
    <location>
        <begin position="1"/>
        <end position="22"/>
    </location>
</feature>
<feature type="binding site" evidence="1">
    <location>
        <begin position="107"/>
        <end position="114"/>
    </location>
    <ligand>
        <name>ATP</name>
        <dbReference type="ChEBI" id="CHEBI:30616"/>
    </ligand>
</feature>
<name>COAA_NOCSJ</name>
<keyword id="KW-0067">ATP-binding</keyword>
<keyword id="KW-0173">Coenzyme A biosynthesis</keyword>
<keyword id="KW-0963">Cytoplasm</keyword>
<keyword id="KW-0418">Kinase</keyword>
<keyword id="KW-0547">Nucleotide-binding</keyword>
<keyword id="KW-1185">Reference proteome</keyword>
<keyword id="KW-0808">Transferase</keyword>